<organism>
    <name type="scientific">Malacoplasma penetrans (strain HF-2)</name>
    <name type="common">Mycoplasma penetrans</name>
    <dbReference type="NCBI Taxonomy" id="272633"/>
    <lineage>
        <taxon>Bacteria</taxon>
        <taxon>Bacillati</taxon>
        <taxon>Mycoplasmatota</taxon>
        <taxon>Mycoplasmoidales</taxon>
        <taxon>Mycoplasmoidaceae</taxon>
        <taxon>Malacoplasma</taxon>
    </lineage>
</organism>
<dbReference type="EMBL" id="BA000026">
    <property type="protein sequence ID" value="BAC44071.1"/>
    <property type="molecule type" value="Genomic_DNA"/>
</dbReference>
<dbReference type="RefSeq" id="WP_011077107.1">
    <property type="nucleotide sequence ID" value="NC_004432.1"/>
</dbReference>
<dbReference type="SMR" id="Q8EWC5"/>
<dbReference type="FunCoup" id="Q8EWC5">
    <property type="interactions" value="152"/>
</dbReference>
<dbReference type="STRING" id="272633.gene:10731382"/>
<dbReference type="KEGG" id="mpe:MYPE2790"/>
<dbReference type="eggNOG" id="COG0632">
    <property type="taxonomic scope" value="Bacteria"/>
</dbReference>
<dbReference type="HOGENOM" id="CLU_087936_1_1_14"/>
<dbReference type="InParanoid" id="Q8EWC5"/>
<dbReference type="Proteomes" id="UP000002522">
    <property type="component" value="Chromosome"/>
</dbReference>
<dbReference type="GO" id="GO:0005737">
    <property type="term" value="C:cytoplasm"/>
    <property type="evidence" value="ECO:0007669"/>
    <property type="project" value="UniProtKB-SubCell"/>
</dbReference>
<dbReference type="GO" id="GO:0009379">
    <property type="term" value="C:Holliday junction helicase complex"/>
    <property type="evidence" value="ECO:0007669"/>
    <property type="project" value="InterPro"/>
</dbReference>
<dbReference type="GO" id="GO:0048476">
    <property type="term" value="C:Holliday junction resolvase complex"/>
    <property type="evidence" value="ECO:0007669"/>
    <property type="project" value="UniProtKB-UniRule"/>
</dbReference>
<dbReference type="GO" id="GO:0005524">
    <property type="term" value="F:ATP binding"/>
    <property type="evidence" value="ECO:0007669"/>
    <property type="project" value="InterPro"/>
</dbReference>
<dbReference type="GO" id="GO:0000400">
    <property type="term" value="F:four-way junction DNA binding"/>
    <property type="evidence" value="ECO:0007669"/>
    <property type="project" value="UniProtKB-UniRule"/>
</dbReference>
<dbReference type="GO" id="GO:0009378">
    <property type="term" value="F:four-way junction helicase activity"/>
    <property type="evidence" value="ECO:0007669"/>
    <property type="project" value="InterPro"/>
</dbReference>
<dbReference type="GO" id="GO:0006310">
    <property type="term" value="P:DNA recombination"/>
    <property type="evidence" value="ECO:0007669"/>
    <property type="project" value="UniProtKB-UniRule"/>
</dbReference>
<dbReference type="GO" id="GO:0006281">
    <property type="term" value="P:DNA repair"/>
    <property type="evidence" value="ECO:0007669"/>
    <property type="project" value="UniProtKB-UniRule"/>
</dbReference>
<dbReference type="CDD" id="cd14332">
    <property type="entry name" value="UBA_RuvA_C"/>
    <property type="match status" value="1"/>
</dbReference>
<dbReference type="Gene3D" id="1.10.150.20">
    <property type="entry name" value="5' to 3' exonuclease, C-terminal subdomain"/>
    <property type="match status" value="1"/>
</dbReference>
<dbReference type="Gene3D" id="2.40.50.140">
    <property type="entry name" value="Nucleic acid-binding proteins"/>
    <property type="match status" value="1"/>
</dbReference>
<dbReference type="HAMAP" id="MF_00031">
    <property type="entry name" value="DNA_HJ_migration_RuvA"/>
    <property type="match status" value="1"/>
</dbReference>
<dbReference type="InterPro" id="IPR013849">
    <property type="entry name" value="DNA_helicase_Holl-junc_RuvA_I"/>
</dbReference>
<dbReference type="InterPro" id="IPR012340">
    <property type="entry name" value="NA-bd_OB-fold"/>
</dbReference>
<dbReference type="InterPro" id="IPR000085">
    <property type="entry name" value="RuvA"/>
</dbReference>
<dbReference type="InterPro" id="IPR010994">
    <property type="entry name" value="RuvA_2-like"/>
</dbReference>
<dbReference type="InterPro" id="IPR011114">
    <property type="entry name" value="RuvA_C"/>
</dbReference>
<dbReference type="NCBIfam" id="TIGR00084">
    <property type="entry name" value="ruvA"/>
    <property type="match status" value="1"/>
</dbReference>
<dbReference type="Pfam" id="PF14520">
    <property type="entry name" value="HHH_5"/>
    <property type="match status" value="1"/>
</dbReference>
<dbReference type="Pfam" id="PF07499">
    <property type="entry name" value="RuvA_C"/>
    <property type="match status" value="1"/>
</dbReference>
<dbReference type="Pfam" id="PF01330">
    <property type="entry name" value="RuvA_N"/>
    <property type="match status" value="1"/>
</dbReference>
<dbReference type="SUPFAM" id="SSF47781">
    <property type="entry name" value="RuvA domain 2-like"/>
    <property type="match status" value="1"/>
</dbReference>
<proteinExistence type="inferred from homology"/>
<gene>
    <name evidence="1" type="primary">ruvA</name>
    <name type="ordered locus">MYPE2790</name>
</gene>
<feature type="chain" id="PRO_0000094650" description="Holliday junction branch migration complex subunit RuvA">
    <location>
        <begin position="1"/>
        <end position="219"/>
    </location>
</feature>
<feature type="region of interest" description="Domain I" evidence="1">
    <location>
        <begin position="1"/>
        <end position="66"/>
    </location>
</feature>
<feature type="region of interest" description="Domain II" evidence="1">
    <location>
        <begin position="67"/>
        <end position="148"/>
    </location>
</feature>
<feature type="region of interest" description="Flexible linker" evidence="1">
    <location>
        <begin position="149"/>
        <end position="154"/>
    </location>
</feature>
<feature type="region of interest" description="Domain III" evidence="1">
    <location>
        <begin position="155"/>
        <end position="219"/>
    </location>
</feature>
<evidence type="ECO:0000255" key="1">
    <source>
        <dbReference type="HAMAP-Rule" id="MF_00031"/>
    </source>
</evidence>
<sequence>MIEYIIGKISYKNNNYLILENNFKGYKLFMSDPNIFEENSSAKIFVYTKIFQNNKNNFLFEYYGFKTLREKIFFENLLTVNGIGPKTSLTILRNDLNLLKELIRNEDIESLSVLEGFTNKTALSIVSALSYKLKNERISEYNNDVNHSSINQQSNSYNPVPDLVSALKALGYKKNMIEKAINLLIPQLSNVSEDQISDLISQAIKIISDEAVTNKTTVS</sequence>
<reference key="1">
    <citation type="journal article" date="2002" name="Nucleic Acids Res.">
        <title>The complete genomic sequence of Mycoplasma penetrans, an intracellular bacterial pathogen in humans.</title>
        <authorList>
            <person name="Sasaki Y."/>
            <person name="Ishikawa J."/>
            <person name="Yamashita A."/>
            <person name="Oshima K."/>
            <person name="Kenri T."/>
            <person name="Furuya K."/>
            <person name="Yoshino C."/>
            <person name="Horino A."/>
            <person name="Shiba T."/>
            <person name="Sasaki T."/>
            <person name="Hattori M."/>
        </authorList>
    </citation>
    <scope>NUCLEOTIDE SEQUENCE [LARGE SCALE GENOMIC DNA]</scope>
    <source>
        <strain>HF-2</strain>
    </source>
</reference>
<accession>Q8EWC5</accession>
<keyword id="KW-0963">Cytoplasm</keyword>
<keyword id="KW-0227">DNA damage</keyword>
<keyword id="KW-0233">DNA recombination</keyword>
<keyword id="KW-0234">DNA repair</keyword>
<keyword id="KW-0238">DNA-binding</keyword>
<keyword id="KW-1185">Reference proteome</keyword>
<protein>
    <recommendedName>
        <fullName evidence="1">Holliday junction branch migration complex subunit RuvA</fullName>
    </recommendedName>
</protein>
<comment type="function">
    <text evidence="1">The RuvA-RuvB-RuvC complex processes Holliday junction (HJ) DNA during genetic recombination and DNA repair, while the RuvA-RuvB complex plays an important role in the rescue of blocked DNA replication forks via replication fork reversal (RFR). RuvA specifically binds to HJ cruciform DNA, conferring on it an open structure. The RuvB hexamer acts as an ATP-dependent pump, pulling dsDNA into and through the RuvAB complex. HJ branch migration allows RuvC to scan DNA until it finds its consensus sequence, where it cleaves and resolves the cruciform DNA.</text>
</comment>
<comment type="subunit">
    <text evidence="1">Homotetramer. Forms an RuvA(8)-RuvB(12)-Holliday junction (HJ) complex. HJ DNA is sandwiched between 2 RuvA tetramers; dsDNA enters through RuvA and exits via RuvB. An RuvB hexamer assembles on each DNA strand where it exits the tetramer. Each RuvB hexamer is contacted by two RuvA subunits (via domain III) on 2 adjacent RuvB subunits; this complex drives branch migration. In the full resolvosome a probable DNA-RuvA(4)-RuvB(12)-RuvC(2) complex forms which resolves the HJ.</text>
</comment>
<comment type="subcellular location">
    <subcellularLocation>
        <location evidence="1">Cytoplasm</location>
    </subcellularLocation>
</comment>
<comment type="domain">
    <text evidence="1">Has three domains with a flexible linker between the domains II and III and assumes an 'L' shape. Domain III is highly mobile and contacts RuvB.</text>
</comment>
<comment type="similarity">
    <text evidence="1">Belongs to the RuvA family.</text>
</comment>
<name>RUVA_MALP2</name>